<protein>
    <recommendedName>
        <fullName evidence="1">UPF0336 protein Tfu_2666</fullName>
    </recommendedName>
</protein>
<accession>Q47LH3</accession>
<comment type="similarity">
    <text evidence="1">Belongs to the UPF0336 family.</text>
</comment>
<evidence type="ECO:0000255" key="1">
    <source>
        <dbReference type="HAMAP-Rule" id="MF_00799"/>
    </source>
</evidence>
<organism>
    <name type="scientific">Thermobifida fusca (strain YX)</name>
    <dbReference type="NCBI Taxonomy" id="269800"/>
    <lineage>
        <taxon>Bacteria</taxon>
        <taxon>Bacillati</taxon>
        <taxon>Actinomycetota</taxon>
        <taxon>Actinomycetes</taxon>
        <taxon>Streptosporangiales</taxon>
        <taxon>Nocardiopsidaceae</taxon>
        <taxon>Thermobifida</taxon>
    </lineage>
</organism>
<reference key="1">
    <citation type="journal article" date="2007" name="J. Bacteriol.">
        <title>Genome sequence and analysis of the soil cellulolytic actinomycete Thermobifida fusca YX.</title>
        <authorList>
            <person name="Lykidis A."/>
            <person name="Mavromatis K."/>
            <person name="Ivanova N."/>
            <person name="Anderson I."/>
            <person name="Land M."/>
            <person name="DiBartolo G."/>
            <person name="Martinez M."/>
            <person name="Lapidus A."/>
            <person name="Lucas S."/>
            <person name="Copeland A."/>
            <person name="Richardson P."/>
            <person name="Wilson D.B."/>
            <person name="Kyrpides N."/>
        </authorList>
    </citation>
    <scope>NUCLEOTIDE SEQUENCE [LARGE SCALE GENOMIC DNA]</scope>
    <source>
        <strain>YX</strain>
    </source>
</reference>
<gene>
    <name type="ordered locus">Tfu_2666</name>
</gene>
<proteinExistence type="inferred from homology"/>
<dbReference type="EMBL" id="CP000088">
    <property type="protein sequence ID" value="AAZ56699.1"/>
    <property type="molecule type" value="Genomic_DNA"/>
</dbReference>
<dbReference type="RefSeq" id="WP_011293089.1">
    <property type="nucleotide sequence ID" value="NC_007333.1"/>
</dbReference>
<dbReference type="SMR" id="Q47LH3"/>
<dbReference type="STRING" id="269800.Tfu_2666"/>
<dbReference type="KEGG" id="tfu:Tfu_2666"/>
<dbReference type="eggNOG" id="COG2030">
    <property type="taxonomic scope" value="Bacteria"/>
</dbReference>
<dbReference type="HOGENOM" id="CLU_116276_0_0_11"/>
<dbReference type="OrthoDB" id="5415111at2"/>
<dbReference type="GO" id="GO:0019171">
    <property type="term" value="F:(3R)-hydroxyacyl-[acyl-carrier-protein] dehydratase activity"/>
    <property type="evidence" value="ECO:0007669"/>
    <property type="project" value="TreeGrafter"/>
</dbReference>
<dbReference type="GO" id="GO:0006633">
    <property type="term" value="P:fatty acid biosynthetic process"/>
    <property type="evidence" value="ECO:0007669"/>
    <property type="project" value="TreeGrafter"/>
</dbReference>
<dbReference type="CDD" id="cd03441">
    <property type="entry name" value="R_hydratase_like"/>
    <property type="match status" value="1"/>
</dbReference>
<dbReference type="Gene3D" id="3.10.129.10">
    <property type="entry name" value="Hotdog Thioesterase"/>
    <property type="match status" value="1"/>
</dbReference>
<dbReference type="HAMAP" id="MF_00799">
    <property type="entry name" value="UPF0336"/>
    <property type="match status" value="1"/>
</dbReference>
<dbReference type="InterPro" id="IPR039569">
    <property type="entry name" value="FAS1-like_DH_region"/>
</dbReference>
<dbReference type="InterPro" id="IPR016709">
    <property type="entry name" value="HadA-like"/>
</dbReference>
<dbReference type="InterPro" id="IPR029069">
    <property type="entry name" value="HotDog_dom_sf"/>
</dbReference>
<dbReference type="InterPro" id="IPR050965">
    <property type="entry name" value="UPF0336/Enoyl-CoA_hydratase"/>
</dbReference>
<dbReference type="PANTHER" id="PTHR43437:SF3">
    <property type="entry name" value="HYDROXYACYL-THIOESTER DEHYDRATASE TYPE 2, MITOCHONDRIAL"/>
    <property type="match status" value="1"/>
</dbReference>
<dbReference type="PANTHER" id="PTHR43437">
    <property type="entry name" value="HYDROXYACYL-THIOESTER DEHYDRATASE TYPE 2, MITOCHONDRIAL-RELATED"/>
    <property type="match status" value="1"/>
</dbReference>
<dbReference type="Pfam" id="PF13452">
    <property type="entry name" value="FAS1_DH_region"/>
    <property type="match status" value="1"/>
</dbReference>
<dbReference type="PIRSF" id="PIRSF018072">
    <property type="entry name" value="UCP018072"/>
    <property type="match status" value="1"/>
</dbReference>
<dbReference type="SUPFAM" id="SSF54637">
    <property type="entry name" value="Thioesterase/thiol ester dehydrase-isomerase"/>
    <property type="match status" value="1"/>
</dbReference>
<feature type="chain" id="PRO_1000046973" description="UPF0336 protein Tfu_2666">
    <location>
        <begin position="1"/>
        <end position="152"/>
    </location>
</feature>
<feature type="domain" description="MaoC-like">
    <location>
        <begin position="7"/>
        <end position="116"/>
    </location>
</feature>
<name>Y2666_THEFY</name>
<sequence length="152" mass="16565">MAINRDYLGRAYELPEPYEVTRVKIREFADAISDPNPLYRDPAHAKEAGYTDVIAPPTFPIILSMEGAGQAIADPELALDFSRVVHGDQRFRYSRPLQAGDVVTCRTTITDIKSLAGNEMLTLESEIATTAGEHVVTSVTMLVVRGDAPSGT</sequence>